<organism>
    <name type="scientific">Brucella anthropi (strain ATCC 49188 / DSM 6882 / CCUG 24695 / JCM 21032 / LMG 3331 / NBRC 15819 / NCTC 12168 / Alc 37)</name>
    <name type="common">Ochrobactrum anthropi</name>
    <dbReference type="NCBI Taxonomy" id="439375"/>
    <lineage>
        <taxon>Bacteria</taxon>
        <taxon>Pseudomonadati</taxon>
        <taxon>Pseudomonadota</taxon>
        <taxon>Alphaproteobacteria</taxon>
        <taxon>Hyphomicrobiales</taxon>
        <taxon>Brucellaceae</taxon>
        <taxon>Brucella/Ochrobactrum group</taxon>
        <taxon>Brucella</taxon>
    </lineage>
</organism>
<reference key="1">
    <citation type="journal article" date="2011" name="J. Bacteriol.">
        <title>Genome of Ochrobactrum anthropi ATCC 49188 T, a versatile opportunistic pathogen and symbiont of several eukaryotic hosts.</title>
        <authorList>
            <person name="Chain P.S."/>
            <person name="Lang D.M."/>
            <person name="Comerci D.J."/>
            <person name="Malfatti S.A."/>
            <person name="Vergez L.M."/>
            <person name="Shin M."/>
            <person name="Ugalde R.A."/>
            <person name="Garcia E."/>
            <person name="Tolmasky M.E."/>
        </authorList>
    </citation>
    <scope>NUCLEOTIDE SEQUENCE [LARGE SCALE GENOMIC DNA]</scope>
    <source>
        <strain>ATCC 49188 / DSM 6882 / CCUG 24695 / JCM 21032 / LMG 3331 / NBRC 15819 / NCTC 12168 / Alc 37</strain>
    </source>
</reference>
<comment type="function">
    <text evidence="1">Key enzyme in the regulation of glycerol uptake and metabolism. Catalyzes the phosphorylation of glycerol to yield sn-glycerol 3-phosphate.</text>
</comment>
<comment type="catalytic activity">
    <reaction evidence="1">
        <text>glycerol + ATP = sn-glycerol 3-phosphate + ADP + H(+)</text>
        <dbReference type="Rhea" id="RHEA:21644"/>
        <dbReference type="ChEBI" id="CHEBI:15378"/>
        <dbReference type="ChEBI" id="CHEBI:17754"/>
        <dbReference type="ChEBI" id="CHEBI:30616"/>
        <dbReference type="ChEBI" id="CHEBI:57597"/>
        <dbReference type="ChEBI" id="CHEBI:456216"/>
        <dbReference type="EC" id="2.7.1.30"/>
    </reaction>
</comment>
<comment type="activity regulation">
    <text evidence="1">Inhibited by fructose 1,6-bisphosphate (FBP).</text>
</comment>
<comment type="pathway">
    <text evidence="1">Polyol metabolism; glycerol degradation via glycerol kinase pathway; sn-glycerol 3-phosphate from glycerol: step 1/1.</text>
</comment>
<comment type="similarity">
    <text evidence="1">Belongs to the FGGY kinase family.</text>
</comment>
<sequence length="499" mass="54897">MTQFIGSIDQGTTSSRFIIFDRQGDIVASDQREHEQIYPKAGWVEHNPIEIWRNTQHVIAAALKKAKLKASDIASVGITNQRETTLLWDRKTGAPLYNAIVWMDTRTDELVSRYTKDGGADQLRAKTGLPISTYFSGLKLRWILDNVPGAREKAEAGDALFGTIDTWLVWNLTGGTEGGIHITDVTNASRTQLMDLSTLQWDEDILRLFDIPSACLPEIRSSSEVYGEITLPSLSGVKLAGILGDQQAALFGQACLEPGEAKNTYGTGCFMLMNTGEKLVPSNYGLLTTVAYKLDGAKPVYALEGSIAITGALVQWLRDNLGIIRNSSDIETLARTVEDNGDVYFVPAFSGLFAPHWQDSARGIIAGLTRFANKGHIARAALEASAYQVREVLDAMVKDSGVEITELRADGGMTINELLMQFQSDILDVPVVRPKIIETTALGAAYAAGLAVGYWKSTKDIVENWQVGHRWHPRMSAEESTRLFNAWEKAVQRSLGWIE</sequence>
<dbReference type="EC" id="2.7.1.30" evidence="1"/>
<dbReference type="EMBL" id="CP000758">
    <property type="protein sequence ID" value="ABS13806.1"/>
    <property type="molecule type" value="Genomic_DNA"/>
</dbReference>
<dbReference type="RefSeq" id="WP_012091247.1">
    <property type="nucleotide sequence ID" value="NC_009667.1"/>
</dbReference>
<dbReference type="SMR" id="A6WXV2"/>
<dbReference type="STRING" id="439375.Oant_1086"/>
<dbReference type="KEGG" id="oan:Oant_1086"/>
<dbReference type="PATRIC" id="fig|439375.7.peg.1135"/>
<dbReference type="eggNOG" id="COG0554">
    <property type="taxonomic scope" value="Bacteria"/>
</dbReference>
<dbReference type="HOGENOM" id="CLU_009281_2_3_5"/>
<dbReference type="PhylomeDB" id="A6WXV2"/>
<dbReference type="UniPathway" id="UPA00618">
    <property type="reaction ID" value="UER00672"/>
</dbReference>
<dbReference type="Proteomes" id="UP000002301">
    <property type="component" value="Chromosome 1"/>
</dbReference>
<dbReference type="GO" id="GO:0005829">
    <property type="term" value="C:cytosol"/>
    <property type="evidence" value="ECO:0007669"/>
    <property type="project" value="TreeGrafter"/>
</dbReference>
<dbReference type="GO" id="GO:0005524">
    <property type="term" value="F:ATP binding"/>
    <property type="evidence" value="ECO:0007669"/>
    <property type="project" value="UniProtKB-UniRule"/>
</dbReference>
<dbReference type="GO" id="GO:0004370">
    <property type="term" value="F:glycerol kinase activity"/>
    <property type="evidence" value="ECO:0000250"/>
    <property type="project" value="UniProtKB"/>
</dbReference>
<dbReference type="GO" id="GO:0019563">
    <property type="term" value="P:glycerol catabolic process"/>
    <property type="evidence" value="ECO:0007669"/>
    <property type="project" value="UniProtKB-UniRule"/>
</dbReference>
<dbReference type="GO" id="GO:0006071">
    <property type="term" value="P:glycerol metabolic process"/>
    <property type="evidence" value="ECO:0000250"/>
    <property type="project" value="UniProtKB"/>
</dbReference>
<dbReference type="GO" id="GO:0006072">
    <property type="term" value="P:glycerol-3-phosphate metabolic process"/>
    <property type="evidence" value="ECO:0007669"/>
    <property type="project" value="InterPro"/>
</dbReference>
<dbReference type="CDD" id="cd07769">
    <property type="entry name" value="ASKHA_NBD_FGGY_GK"/>
    <property type="match status" value="1"/>
</dbReference>
<dbReference type="FunFam" id="3.30.420.40:FF:000007">
    <property type="entry name" value="Glycerol kinase"/>
    <property type="match status" value="1"/>
</dbReference>
<dbReference type="FunFam" id="3.30.420.40:FF:000008">
    <property type="entry name" value="Glycerol kinase"/>
    <property type="match status" value="1"/>
</dbReference>
<dbReference type="Gene3D" id="3.30.420.40">
    <property type="match status" value="2"/>
</dbReference>
<dbReference type="HAMAP" id="MF_00186">
    <property type="entry name" value="Glycerol_kin"/>
    <property type="match status" value="1"/>
</dbReference>
<dbReference type="InterPro" id="IPR043129">
    <property type="entry name" value="ATPase_NBD"/>
</dbReference>
<dbReference type="InterPro" id="IPR000577">
    <property type="entry name" value="Carb_kinase_FGGY"/>
</dbReference>
<dbReference type="InterPro" id="IPR018483">
    <property type="entry name" value="Carb_kinase_FGGY_CS"/>
</dbReference>
<dbReference type="InterPro" id="IPR018485">
    <property type="entry name" value="FGGY_C"/>
</dbReference>
<dbReference type="InterPro" id="IPR018484">
    <property type="entry name" value="FGGY_N"/>
</dbReference>
<dbReference type="InterPro" id="IPR005999">
    <property type="entry name" value="Glycerol_kin"/>
</dbReference>
<dbReference type="NCBIfam" id="TIGR01311">
    <property type="entry name" value="glycerol_kin"/>
    <property type="match status" value="1"/>
</dbReference>
<dbReference type="NCBIfam" id="NF000756">
    <property type="entry name" value="PRK00047.1"/>
    <property type="match status" value="1"/>
</dbReference>
<dbReference type="PANTHER" id="PTHR10196:SF69">
    <property type="entry name" value="GLYCEROL KINASE"/>
    <property type="match status" value="1"/>
</dbReference>
<dbReference type="PANTHER" id="PTHR10196">
    <property type="entry name" value="SUGAR KINASE"/>
    <property type="match status" value="1"/>
</dbReference>
<dbReference type="Pfam" id="PF02782">
    <property type="entry name" value="FGGY_C"/>
    <property type="match status" value="1"/>
</dbReference>
<dbReference type="Pfam" id="PF00370">
    <property type="entry name" value="FGGY_N"/>
    <property type="match status" value="1"/>
</dbReference>
<dbReference type="PIRSF" id="PIRSF000538">
    <property type="entry name" value="GlpK"/>
    <property type="match status" value="1"/>
</dbReference>
<dbReference type="SUPFAM" id="SSF53067">
    <property type="entry name" value="Actin-like ATPase domain"/>
    <property type="match status" value="2"/>
</dbReference>
<dbReference type="PROSITE" id="PS00933">
    <property type="entry name" value="FGGY_KINASES_1"/>
    <property type="match status" value="1"/>
</dbReference>
<dbReference type="PROSITE" id="PS00445">
    <property type="entry name" value="FGGY_KINASES_2"/>
    <property type="match status" value="1"/>
</dbReference>
<feature type="chain" id="PRO_1000020754" description="Glycerol kinase">
    <location>
        <begin position="1"/>
        <end position="499"/>
    </location>
</feature>
<feature type="binding site" evidence="1">
    <location>
        <position position="12"/>
    </location>
    <ligand>
        <name>ADP</name>
        <dbReference type="ChEBI" id="CHEBI:456216"/>
    </ligand>
</feature>
<feature type="binding site" evidence="1">
    <location>
        <position position="12"/>
    </location>
    <ligand>
        <name>ATP</name>
        <dbReference type="ChEBI" id="CHEBI:30616"/>
    </ligand>
</feature>
<feature type="binding site" evidence="1">
    <location>
        <position position="12"/>
    </location>
    <ligand>
        <name>sn-glycerol 3-phosphate</name>
        <dbReference type="ChEBI" id="CHEBI:57597"/>
    </ligand>
</feature>
<feature type="binding site" evidence="1">
    <location>
        <position position="13"/>
    </location>
    <ligand>
        <name>ATP</name>
        <dbReference type="ChEBI" id="CHEBI:30616"/>
    </ligand>
</feature>
<feature type="binding site" evidence="1">
    <location>
        <position position="14"/>
    </location>
    <ligand>
        <name>ATP</name>
        <dbReference type="ChEBI" id="CHEBI:30616"/>
    </ligand>
</feature>
<feature type="binding site" evidence="1">
    <location>
        <position position="16"/>
    </location>
    <ligand>
        <name>ADP</name>
        <dbReference type="ChEBI" id="CHEBI:456216"/>
    </ligand>
</feature>
<feature type="binding site" evidence="1">
    <location>
        <position position="82"/>
    </location>
    <ligand>
        <name>glycerol</name>
        <dbReference type="ChEBI" id="CHEBI:17754"/>
    </ligand>
</feature>
<feature type="binding site" evidence="1">
    <location>
        <position position="82"/>
    </location>
    <ligand>
        <name>sn-glycerol 3-phosphate</name>
        <dbReference type="ChEBI" id="CHEBI:57597"/>
    </ligand>
</feature>
<feature type="binding site" evidence="1">
    <location>
        <position position="83"/>
    </location>
    <ligand>
        <name>glycerol</name>
        <dbReference type="ChEBI" id="CHEBI:17754"/>
    </ligand>
</feature>
<feature type="binding site" evidence="1">
    <location>
        <position position="83"/>
    </location>
    <ligand>
        <name>sn-glycerol 3-phosphate</name>
        <dbReference type="ChEBI" id="CHEBI:57597"/>
    </ligand>
</feature>
<feature type="binding site" evidence="1">
    <location>
        <position position="134"/>
    </location>
    <ligand>
        <name>glycerol</name>
        <dbReference type="ChEBI" id="CHEBI:17754"/>
    </ligand>
</feature>
<feature type="binding site" evidence="1">
    <location>
        <position position="134"/>
    </location>
    <ligand>
        <name>sn-glycerol 3-phosphate</name>
        <dbReference type="ChEBI" id="CHEBI:57597"/>
    </ligand>
</feature>
<feature type="binding site" evidence="1">
    <location>
        <position position="245"/>
    </location>
    <ligand>
        <name>glycerol</name>
        <dbReference type="ChEBI" id="CHEBI:17754"/>
    </ligand>
</feature>
<feature type="binding site" evidence="1">
    <location>
        <position position="245"/>
    </location>
    <ligand>
        <name>sn-glycerol 3-phosphate</name>
        <dbReference type="ChEBI" id="CHEBI:57597"/>
    </ligand>
</feature>
<feature type="binding site" evidence="1">
    <location>
        <position position="246"/>
    </location>
    <ligand>
        <name>glycerol</name>
        <dbReference type="ChEBI" id="CHEBI:17754"/>
    </ligand>
</feature>
<feature type="binding site" evidence="1">
    <location>
        <position position="267"/>
    </location>
    <ligand>
        <name>ADP</name>
        <dbReference type="ChEBI" id="CHEBI:456216"/>
    </ligand>
</feature>
<feature type="binding site" evidence="1">
    <location>
        <position position="267"/>
    </location>
    <ligand>
        <name>ATP</name>
        <dbReference type="ChEBI" id="CHEBI:30616"/>
    </ligand>
</feature>
<feature type="binding site" evidence="1">
    <location>
        <position position="311"/>
    </location>
    <ligand>
        <name>ADP</name>
        <dbReference type="ChEBI" id="CHEBI:456216"/>
    </ligand>
</feature>
<feature type="binding site" evidence="1">
    <location>
        <position position="311"/>
    </location>
    <ligand>
        <name>ATP</name>
        <dbReference type="ChEBI" id="CHEBI:30616"/>
    </ligand>
</feature>
<feature type="binding site" evidence="1">
    <location>
        <position position="315"/>
    </location>
    <ligand>
        <name>ATP</name>
        <dbReference type="ChEBI" id="CHEBI:30616"/>
    </ligand>
</feature>
<feature type="binding site" evidence="1">
    <location>
        <position position="412"/>
    </location>
    <ligand>
        <name>ADP</name>
        <dbReference type="ChEBI" id="CHEBI:456216"/>
    </ligand>
</feature>
<feature type="binding site" evidence="1">
    <location>
        <position position="412"/>
    </location>
    <ligand>
        <name>ATP</name>
        <dbReference type="ChEBI" id="CHEBI:30616"/>
    </ligand>
</feature>
<feature type="binding site" evidence="1">
    <location>
        <position position="416"/>
    </location>
    <ligand>
        <name>ADP</name>
        <dbReference type="ChEBI" id="CHEBI:456216"/>
    </ligand>
</feature>
<protein>
    <recommendedName>
        <fullName evidence="1">Glycerol kinase</fullName>
        <ecNumber evidence="1">2.7.1.30</ecNumber>
    </recommendedName>
    <alternativeName>
        <fullName evidence="1">ATP:glycerol 3-phosphotransferase</fullName>
    </alternativeName>
    <alternativeName>
        <fullName evidence="1">Glycerokinase</fullName>
        <shortName evidence="1">GK</shortName>
    </alternativeName>
</protein>
<name>GLPK_BRUA4</name>
<evidence type="ECO:0000255" key="1">
    <source>
        <dbReference type="HAMAP-Rule" id="MF_00186"/>
    </source>
</evidence>
<accession>A6WXV2</accession>
<gene>
    <name evidence="1" type="primary">glpK</name>
    <name type="ordered locus">Oant_1086</name>
</gene>
<keyword id="KW-0067">ATP-binding</keyword>
<keyword id="KW-0319">Glycerol metabolism</keyword>
<keyword id="KW-0418">Kinase</keyword>
<keyword id="KW-0547">Nucleotide-binding</keyword>
<keyword id="KW-1185">Reference proteome</keyword>
<keyword id="KW-0808">Transferase</keyword>
<proteinExistence type="inferred from homology"/>